<feature type="chain" id="PRO_0000321814" description="Adenylosuccinate synthetase">
    <location>
        <begin position="1"/>
        <end position="440"/>
    </location>
</feature>
<feature type="active site" description="Proton acceptor" evidence="1">
    <location>
        <position position="15"/>
    </location>
</feature>
<feature type="active site" description="Proton donor" evidence="1">
    <location>
        <position position="43"/>
    </location>
</feature>
<feature type="binding site" evidence="1">
    <location>
        <begin position="14"/>
        <end position="20"/>
    </location>
    <ligand>
        <name>GTP</name>
        <dbReference type="ChEBI" id="CHEBI:37565"/>
    </ligand>
</feature>
<feature type="binding site" description="in other chain" evidence="1">
    <location>
        <begin position="15"/>
        <end position="18"/>
    </location>
    <ligand>
        <name>IMP</name>
        <dbReference type="ChEBI" id="CHEBI:58053"/>
        <note>ligand shared between dimeric partners</note>
    </ligand>
</feature>
<feature type="binding site" evidence="1">
    <location>
        <position position="15"/>
    </location>
    <ligand>
        <name>Mg(2+)</name>
        <dbReference type="ChEBI" id="CHEBI:18420"/>
    </ligand>
</feature>
<feature type="binding site" description="in other chain" evidence="1">
    <location>
        <begin position="40"/>
        <end position="43"/>
    </location>
    <ligand>
        <name>IMP</name>
        <dbReference type="ChEBI" id="CHEBI:58053"/>
        <note>ligand shared between dimeric partners</note>
    </ligand>
</feature>
<feature type="binding site" evidence="1">
    <location>
        <begin position="42"/>
        <end position="44"/>
    </location>
    <ligand>
        <name>GTP</name>
        <dbReference type="ChEBI" id="CHEBI:37565"/>
    </ligand>
</feature>
<feature type="binding site" evidence="1">
    <location>
        <position position="42"/>
    </location>
    <ligand>
        <name>Mg(2+)</name>
        <dbReference type="ChEBI" id="CHEBI:18420"/>
    </ligand>
</feature>
<feature type="binding site" description="in other chain" evidence="1">
    <location>
        <position position="131"/>
    </location>
    <ligand>
        <name>IMP</name>
        <dbReference type="ChEBI" id="CHEBI:58053"/>
        <note>ligand shared between dimeric partners</note>
    </ligand>
</feature>
<feature type="binding site" evidence="1">
    <location>
        <position position="145"/>
    </location>
    <ligand>
        <name>IMP</name>
        <dbReference type="ChEBI" id="CHEBI:58053"/>
        <note>ligand shared between dimeric partners</note>
    </ligand>
</feature>
<feature type="binding site" description="in other chain" evidence="1">
    <location>
        <position position="226"/>
    </location>
    <ligand>
        <name>IMP</name>
        <dbReference type="ChEBI" id="CHEBI:58053"/>
        <note>ligand shared between dimeric partners</note>
    </ligand>
</feature>
<feature type="binding site" description="in other chain" evidence="1">
    <location>
        <position position="241"/>
    </location>
    <ligand>
        <name>IMP</name>
        <dbReference type="ChEBI" id="CHEBI:58053"/>
        <note>ligand shared between dimeric partners</note>
    </ligand>
</feature>
<feature type="binding site" evidence="1">
    <location>
        <begin position="309"/>
        <end position="315"/>
    </location>
    <ligand>
        <name>substrate</name>
    </ligand>
</feature>
<feature type="binding site" description="in other chain" evidence="1">
    <location>
        <position position="313"/>
    </location>
    <ligand>
        <name>IMP</name>
        <dbReference type="ChEBI" id="CHEBI:58053"/>
        <note>ligand shared between dimeric partners</note>
    </ligand>
</feature>
<feature type="binding site" evidence="1">
    <location>
        <position position="315"/>
    </location>
    <ligand>
        <name>GTP</name>
        <dbReference type="ChEBI" id="CHEBI:37565"/>
    </ligand>
</feature>
<feature type="binding site" evidence="1">
    <location>
        <begin position="341"/>
        <end position="343"/>
    </location>
    <ligand>
        <name>GTP</name>
        <dbReference type="ChEBI" id="CHEBI:37565"/>
    </ligand>
</feature>
<feature type="binding site" evidence="1">
    <location>
        <begin position="423"/>
        <end position="425"/>
    </location>
    <ligand>
        <name>GTP</name>
        <dbReference type="ChEBI" id="CHEBI:37565"/>
    </ligand>
</feature>
<evidence type="ECO:0000255" key="1">
    <source>
        <dbReference type="HAMAP-Rule" id="MF_00011"/>
    </source>
</evidence>
<comment type="function">
    <text evidence="1">Plays an important role in the de novo pathway of purine nucleotide biosynthesis. Catalyzes the first committed step in the biosynthesis of AMP from IMP.</text>
</comment>
<comment type="catalytic activity">
    <reaction evidence="1">
        <text>IMP + L-aspartate + GTP = N(6)-(1,2-dicarboxyethyl)-AMP + GDP + phosphate + 2 H(+)</text>
        <dbReference type="Rhea" id="RHEA:15753"/>
        <dbReference type="ChEBI" id="CHEBI:15378"/>
        <dbReference type="ChEBI" id="CHEBI:29991"/>
        <dbReference type="ChEBI" id="CHEBI:37565"/>
        <dbReference type="ChEBI" id="CHEBI:43474"/>
        <dbReference type="ChEBI" id="CHEBI:57567"/>
        <dbReference type="ChEBI" id="CHEBI:58053"/>
        <dbReference type="ChEBI" id="CHEBI:58189"/>
        <dbReference type="EC" id="6.3.4.4"/>
    </reaction>
</comment>
<comment type="cofactor">
    <cofactor evidence="1">
        <name>Mg(2+)</name>
        <dbReference type="ChEBI" id="CHEBI:18420"/>
    </cofactor>
    <text evidence="1">Binds 1 Mg(2+) ion per subunit.</text>
</comment>
<comment type="pathway">
    <text evidence="1">Purine metabolism; AMP biosynthesis via de novo pathway; AMP from IMP: step 1/2.</text>
</comment>
<comment type="subunit">
    <text evidence="1">Homodimer.</text>
</comment>
<comment type="subcellular location">
    <subcellularLocation>
        <location evidence="1">Cytoplasm</location>
    </subcellularLocation>
</comment>
<comment type="similarity">
    <text evidence="1">Belongs to the adenylosuccinate synthetase family.</text>
</comment>
<sequence length="440" mass="48137">MVKKNIVVVGTQWGDEGKGKIVDLLTDRVAAVVRFQGGHNAGHTLVIDGKKTVLHLIPSGILREDVECFIGNGVVLAPEALEKEVAQLEDTGLKVKHRLKISDACPLILDYHVALDQARELARGNKAIGTTGRGIGPAYEDKVARRGLRAGDLKNMSQLKQKLQTAMEYHNYMLTNYYKAEPVDFETLWAKCQAYADLIVPMLADIPNLIDLYNKEGKNLMFEGAQGTLLDIDQGTYPYVTSSNTTAGGAASGSGIGPCQLDYVLGITKAYATRVGGGPFPTELRYDVATDEGDAVGKELGTRGREFGATTGRQRRCGWFDAVALRRSAQVNGLTGVCLTKLDVLDELEEIKVCTKYRKDGQDVFLPPSSADEYELVEPHYETLKGWNTSTVGIDSWDALPEEAKVYIRFLEKEMGVTVSILSTGPDRSETLVLEDPFEV</sequence>
<name>PURA_HYDCU</name>
<protein>
    <recommendedName>
        <fullName evidence="1">Adenylosuccinate synthetase</fullName>
        <shortName evidence="1">AMPSase</shortName>
        <shortName evidence="1">AdSS</shortName>
        <ecNumber evidence="1">6.3.4.4</ecNumber>
    </recommendedName>
    <alternativeName>
        <fullName evidence="1">IMP--aspartate ligase</fullName>
    </alternativeName>
</protein>
<dbReference type="EC" id="6.3.4.4" evidence="1"/>
<dbReference type="EMBL" id="CP000109">
    <property type="protein sequence ID" value="ABB41689.1"/>
    <property type="molecule type" value="Genomic_DNA"/>
</dbReference>
<dbReference type="SMR" id="Q31GN4"/>
<dbReference type="STRING" id="317025.Tcr_1094"/>
<dbReference type="KEGG" id="tcx:Tcr_1094"/>
<dbReference type="eggNOG" id="COG0104">
    <property type="taxonomic scope" value="Bacteria"/>
</dbReference>
<dbReference type="HOGENOM" id="CLU_029848_0_0_6"/>
<dbReference type="OrthoDB" id="9807553at2"/>
<dbReference type="UniPathway" id="UPA00075">
    <property type="reaction ID" value="UER00335"/>
</dbReference>
<dbReference type="GO" id="GO:0005737">
    <property type="term" value="C:cytoplasm"/>
    <property type="evidence" value="ECO:0007669"/>
    <property type="project" value="UniProtKB-SubCell"/>
</dbReference>
<dbReference type="GO" id="GO:0004019">
    <property type="term" value="F:adenylosuccinate synthase activity"/>
    <property type="evidence" value="ECO:0007669"/>
    <property type="project" value="UniProtKB-UniRule"/>
</dbReference>
<dbReference type="GO" id="GO:0005525">
    <property type="term" value="F:GTP binding"/>
    <property type="evidence" value="ECO:0007669"/>
    <property type="project" value="UniProtKB-UniRule"/>
</dbReference>
<dbReference type="GO" id="GO:0000287">
    <property type="term" value="F:magnesium ion binding"/>
    <property type="evidence" value="ECO:0007669"/>
    <property type="project" value="UniProtKB-UniRule"/>
</dbReference>
<dbReference type="GO" id="GO:0044208">
    <property type="term" value="P:'de novo' AMP biosynthetic process"/>
    <property type="evidence" value="ECO:0007669"/>
    <property type="project" value="UniProtKB-UniRule"/>
</dbReference>
<dbReference type="GO" id="GO:0046040">
    <property type="term" value="P:IMP metabolic process"/>
    <property type="evidence" value="ECO:0007669"/>
    <property type="project" value="TreeGrafter"/>
</dbReference>
<dbReference type="CDD" id="cd03108">
    <property type="entry name" value="AdSS"/>
    <property type="match status" value="1"/>
</dbReference>
<dbReference type="FunFam" id="1.10.300.10:FF:000001">
    <property type="entry name" value="Adenylosuccinate synthetase"/>
    <property type="match status" value="1"/>
</dbReference>
<dbReference type="FunFam" id="3.90.170.10:FF:000001">
    <property type="entry name" value="Adenylosuccinate synthetase"/>
    <property type="match status" value="1"/>
</dbReference>
<dbReference type="Gene3D" id="3.40.440.10">
    <property type="entry name" value="Adenylosuccinate Synthetase, subunit A, domain 1"/>
    <property type="match status" value="1"/>
</dbReference>
<dbReference type="Gene3D" id="1.10.300.10">
    <property type="entry name" value="Adenylosuccinate Synthetase, subunit A, domain 2"/>
    <property type="match status" value="1"/>
</dbReference>
<dbReference type="Gene3D" id="3.90.170.10">
    <property type="entry name" value="Adenylosuccinate Synthetase, subunit A, domain 3"/>
    <property type="match status" value="1"/>
</dbReference>
<dbReference type="HAMAP" id="MF_00011">
    <property type="entry name" value="Adenylosucc_synth"/>
    <property type="match status" value="1"/>
</dbReference>
<dbReference type="InterPro" id="IPR018220">
    <property type="entry name" value="Adenylosuccin_syn_GTP-bd"/>
</dbReference>
<dbReference type="InterPro" id="IPR033128">
    <property type="entry name" value="Adenylosuccin_syn_Lys_AS"/>
</dbReference>
<dbReference type="InterPro" id="IPR042109">
    <property type="entry name" value="Adenylosuccinate_synth_dom1"/>
</dbReference>
<dbReference type="InterPro" id="IPR042110">
    <property type="entry name" value="Adenylosuccinate_synth_dom2"/>
</dbReference>
<dbReference type="InterPro" id="IPR042111">
    <property type="entry name" value="Adenylosuccinate_synth_dom3"/>
</dbReference>
<dbReference type="InterPro" id="IPR001114">
    <property type="entry name" value="Adenylosuccinate_synthetase"/>
</dbReference>
<dbReference type="InterPro" id="IPR027417">
    <property type="entry name" value="P-loop_NTPase"/>
</dbReference>
<dbReference type="NCBIfam" id="NF002223">
    <property type="entry name" value="PRK01117.1"/>
    <property type="match status" value="1"/>
</dbReference>
<dbReference type="NCBIfam" id="TIGR00184">
    <property type="entry name" value="purA"/>
    <property type="match status" value="1"/>
</dbReference>
<dbReference type="PANTHER" id="PTHR11846">
    <property type="entry name" value="ADENYLOSUCCINATE SYNTHETASE"/>
    <property type="match status" value="1"/>
</dbReference>
<dbReference type="PANTHER" id="PTHR11846:SF0">
    <property type="entry name" value="ADENYLOSUCCINATE SYNTHETASE"/>
    <property type="match status" value="1"/>
</dbReference>
<dbReference type="Pfam" id="PF00709">
    <property type="entry name" value="Adenylsucc_synt"/>
    <property type="match status" value="1"/>
</dbReference>
<dbReference type="SMART" id="SM00788">
    <property type="entry name" value="Adenylsucc_synt"/>
    <property type="match status" value="1"/>
</dbReference>
<dbReference type="SUPFAM" id="SSF52540">
    <property type="entry name" value="P-loop containing nucleoside triphosphate hydrolases"/>
    <property type="match status" value="1"/>
</dbReference>
<dbReference type="PROSITE" id="PS01266">
    <property type="entry name" value="ADENYLOSUCCIN_SYN_1"/>
    <property type="match status" value="1"/>
</dbReference>
<dbReference type="PROSITE" id="PS00513">
    <property type="entry name" value="ADENYLOSUCCIN_SYN_2"/>
    <property type="match status" value="1"/>
</dbReference>
<proteinExistence type="inferred from homology"/>
<keyword id="KW-0963">Cytoplasm</keyword>
<keyword id="KW-0342">GTP-binding</keyword>
<keyword id="KW-0436">Ligase</keyword>
<keyword id="KW-0460">Magnesium</keyword>
<keyword id="KW-0479">Metal-binding</keyword>
<keyword id="KW-0547">Nucleotide-binding</keyword>
<keyword id="KW-0658">Purine biosynthesis</keyword>
<gene>
    <name evidence="1" type="primary">purA</name>
    <name type="ordered locus">Tcr_1094</name>
</gene>
<organism>
    <name type="scientific">Hydrogenovibrio crunogenus (strain DSM 25203 / XCL-2)</name>
    <name type="common">Thiomicrospira crunogena</name>
    <dbReference type="NCBI Taxonomy" id="317025"/>
    <lineage>
        <taxon>Bacteria</taxon>
        <taxon>Pseudomonadati</taxon>
        <taxon>Pseudomonadota</taxon>
        <taxon>Gammaproteobacteria</taxon>
        <taxon>Thiotrichales</taxon>
        <taxon>Piscirickettsiaceae</taxon>
        <taxon>Hydrogenovibrio</taxon>
    </lineage>
</organism>
<reference key="1">
    <citation type="journal article" date="2006" name="PLoS Biol.">
        <title>The genome of deep-sea vent chemolithoautotroph Thiomicrospira crunogena XCL-2.</title>
        <authorList>
            <person name="Scott K.M."/>
            <person name="Sievert S.M."/>
            <person name="Abril F.N."/>
            <person name="Ball L.A."/>
            <person name="Barrett C.J."/>
            <person name="Blake R.A."/>
            <person name="Boller A.J."/>
            <person name="Chain P.S.G."/>
            <person name="Clark J.A."/>
            <person name="Davis C.R."/>
            <person name="Detter C."/>
            <person name="Do K.F."/>
            <person name="Dobrinski K.P."/>
            <person name="Faza B.I."/>
            <person name="Fitzpatrick K.A."/>
            <person name="Freyermuth S.K."/>
            <person name="Harmer T.L."/>
            <person name="Hauser L.J."/>
            <person name="Huegler M."/>
            <person name="Kerfeld C.A."/>
            <person name="Klotz M.G."/>
            <person name="Kong W.W."/>
            <person name="Land M."/>
            <person name="Lapidus A."/>
            <person name="Larimer F.W."/>
            <person name="Longo D.L."/>
            <person name="Lucas S."/>
            <person name="Malfatti S.A."/>
            <person name="Massey S.E."/>
            <person name="Martin D.D."/>
            <person name="McCuddin Z."/>
            <person name="Meyer F."/>
            <person name="Moore J.L."/>
            <person name="Ocampo L.H. Jr."/>
            <person name="Paul J.H."/>
            <person name="Paulsen I.T."/>
            <person name="Reep D.K."/>
            <person name="Ren Q."/>
            <person name="Ross R.L."/>
            <person name="Sato P.Y."/>
            <person name="Thomas P."/>
            <person name="Tinkham L.E."/>
            <person name="Zeruth G.T."/>
        </authorList>
    </citation>
    <scope>NUCLEOTIDE SEQUENCE [LARGE SCALE GENOMIC DNA]</scope>
    <source>
        <strain>DSM 25203 / XCL-2</strain>
    </source>
</reference>
<accession>Q31GN4</accession>